<accession>Q5HFF2</accession>
<dbReference type="EMBL" id="CP000046">
    <property type="protein sequence ID" value="AAW38281.1"/>
    <property type="molecule type" value="Genomic_DNA"/>
</dbReference>
<dbReference type="RefSeq" id="WP_000431312.1">
    <property type="nucleotide sequence ID" value="NZ_JBGOFO010000003.1"/>
</dbReference>
<dbReference type="SMR" id="Q5HFF2"/>
<dbReference type="KEGG" id="sac:SACOL1665"/>
<dbReference type="HOGENOM" id="CLU_101379_2_1_9"/>
<dbReference type="Proteomes" id="UP000000530">
    <property type="component" value="Chromosome"/>
</dbReference>
<dbReference type="GO" id="GO:0003677">
    <property type="term" value="F:DNA binding"/>
    <property type="evidence" value="ECO:0007669"/>
    <property type="project" value="UniProtKB-UniRule"/>
</dbReference>
<dbReference type="GO" id="GO:0070063">
    <property type="term" value="F:RNA polymerase binding"/>
    <property type="evidence" value="ECO:0007669"/>
    <property type="project" value="InterPro"/>
</dbReference>
<dbReference type="GO" id="GO:0006354">
    <property type="term" value="P:DNA-templated transcription elongation"/>
    <property type="evidence" value="ECO:0007669"/>
    <property type="project" value="TreeGrafter"/>
</dbReference>
<dbReference type="GO" id="GO:0032784">
    <property type="term" value="P:regulation of DNA-templated transcription elongation"/>
    <property type="evidence" value="ECO:0007669"/>
    <property type="project" value="UniProtKB-UniRule"/>
</dbReference>
<dbReference type="FunFam" id="1.10.287.180:FF:000001">
    <property type="entry name" value="Transcription elongation factor GreA"/>
    <property type="match status" value="1"/>
</dbReference>
<dbReference type="FunFam" id="3.10.50.30:FF:000001">
    <property type="entry name" value="Transcription elongation factor GreA"/>
    <property type="match status" value="1"/>
</dbReference>
<dbReference type="Gene3D" id="3.10.50.30">
    <property type="entry name" value="Transcription elongation factor, GreA/GreB, C-terminal domain"/>
    <property type="match status" value="1"/>
</dbReference>
<dbReference type="Gene3D" id="1.10.287.180">
    <property type="entry name" value="Transcription elongation factor, GreA/GreB, N-terminal domain"/>
    <property type="match status" value="1"/>
</dbReference>
<dbReference type="HAMAP" id="MF_00105">
    <property type="entry name" value="GreA_GreB"/>
    <property type="match status" value="1"/>
</dbReference>
<dbReference type="InterPro" id="IPR036953">
    <property type="entry name" value="GreA/GreB_C_sf"/>
</dbReference>
<dbReference type="InterPro" id="IPR018151">
    <property type="entry name" value="TF_GreA/GreB_CS"/>
</dbReference>
<dbReference type="InterPro" id="IPR006359">
    <property type="entry name" value="Tscrpt_elong_fac_GreA"/>
</dbReference>
<dbReference type="InterPro" id="IPR028624">
    <property type="entry name" value="Tscrpt_elong_fac_GreA/B"/>
</dbReference>
<dbReference type="InterPro" id="IPR001437">
    <property type="entry name" value="Tscrpt_elong_fac_GreA/B_C"/>
</dbReference>
<dbReference type="InterPro" id="IPR023459">
    <property type="entry name" value="Tscrpt_elong_fac_GreA/B_fam"/>
</dbReference>
<dbReference type="InterPro" id="IPR022691">
    <property type="entry name" value="Tscrpt_elong_fac_GreA/B_N"/>
</dbReference>
<dbReference type="InterPro" id="IPR036805">
    <property type="entry name" value="Tscrpt_elong_fac_GreA/B_N_sf"/>
</dbReference>
<dbReference type="NCBIfam" id="TIGR01462">
    <property type="entry name" value="greA"/>
    <property type="match status" value="1"/>
</dbReference>
<dbReference type="NCBIfam" id="NF001261">
    <property type="entry name" value="PRK00226.1-2"/>
    <property type="match status" value="1"/>
</dbReference>
<dbReference type="NCBIfam" id="NF001263">
    <property type="entry name" value="PRK00226.1-4"/>
    <property type="match status" value="1"/>
</dbReference>
<dbReference type="PANTHER" id="PTHR30437">
    <property type="entry name" value="TRANSCRIPTION ELONGATION FACTOR GREA"/>
    <property type="match status" value="1"/>
</dbReference>
<dbReference type="PANTHER" id="PTHR30437:SF4">
    <property type="entry name" value="TRANSCRIPTION ELONGATION FACTOR GREA"/>
    <property type="match status" value="1"/>
</dbReference>
<dbReference type="Pfam" id="PF01272">
    <property type="entry name" value="GreA_GreB"/>
    <property type="match status" value="1"/>
</dbReference>
<dbReference type="Pfam" id="PF03449">
    <property type="entry name" value="GreA_GreB_N"/>
    <property type="match status" value="1"/>
</dbReference>
<dbReference type="PIRSF" id="PIRSF006092">
    <property type="entry name" value="GreA_GreB"/>
    <property type="match status" value="1"/>
</dbReference>
<dbReference type="SUPFAM" id="SSF54534">
    <property type="entry name" value="FKBP-like"/>
    <property type="match status" value="1"/>
</dbReference>
<dbReference type="SUPFAM" id="SSF46557">
    <property type="entry name" value="GreA transcript cleavage protein, N-terminal domain"/>
    <property type="match status" value="1"/>
</dbReference>
<dbReference type="PROSITE" id="PS00829">
    <property type="entry name" value="GREAB_1"/>
    <property type="match status" value="1"/>
</dbReference>
<dbReference type="PROSITE" id="PS00830">
    <property type="entry name" value="GREAB_2"/>
    <property type="match status" value="1"/>
</dbReference>
<gene>
    <name evidence="1" type="primary">greA</name>
    <name type="ordered locus">SACOL1665</name>
</gene>
<protein>
    <recommendedName>
        <fullName evidence="1">Transcription elongation factor GreA</fullName>
    </recommendedName>
    <alternativeName>
        <fullName evidence="1">Transcript cleavage factor GreA</fullName>
    </alternativeName>
</protein>
<proteinExistence type="inferred from homology"/>
<name>GREA_STAAC</name>
<reference key="1">
    <citation type="journal article" date="2005" name="J. Bacteriol.">
        <title>Insights on evolution of virulence and resistance from the complete genome analysis of an early methicillin-resistant Staphylococcus aureus strain and a biofilm-producing methicillin-resistant Staphylococcus epidermidis strain.</title>
        <authorList>
            <person name="Gill S.R."/>
            <person name="Fouts D.E."/>
            <person name="Archer G.L."/>
            <person name="Mongodin E.F."/>
            <person name="DeBoy R.T."/>
            <person name="Ravel J."/>
            <person name="Paulsen I.T."/>
            <person name="Kolonay J.F."/>
            <person name="Brinkac L.M."/>
            <person name="Beanan M.J."/>
            <person name="Dodson R.J."/>
            <person name="Daugherty S.C."/>
            <person name="Madupu R."/>
            <person name="Angiuoli S.V."/>
            <person name="Durkin A.S."/>
            <person name="Haft D.H."/>
            <person name="Vamathevan J.J."/>
            <person name="Khouri H."/>
            <person name="Utterback T.R."/>
            <person name="Lee C."/>
            <person name="Dimitrov G."/>
            <person name="Jiang L."/>
            <person name="Qin H."/>
            <person name="Weidman J."/>
            <person name="Tran K."/>
            <person name="Kang K.H."/>
            <person name="Hance I.R."/>
            <person name="Nelson K.E."/>
            <person name="Fraser C.M."/>
        </authorList>
    </citation>
    <scope>NUCLEOTIDE SEQUENCE [LARGE SCALE GENOMIC DNA]</scope>
    <source>
        <strain>COL</strain>
    </source>
</reference>
<comment type="function">
    <text evidence="1">Necessary for efficient RNA polymerase transcription elongation past template-encoded arresting sites. The arresting sites in DNA have the property of trapping a certain fraction of elongating RNA polymerases that pass through, resulting in locked ternary complexes. Cleavage of the nascent transcript by cleavage factors such as GreA or GreB allows the resumption of elongation from the new 3'terminus. GreA releases sequences of 2 to 3 nucleotides.</text>
</comment>
<comment type="similarity">
    <text evidence="1">Belongs to the GreA/GreB family.</text>
</comment>
<keyword id="KW-0175">Coiled coil</keyword>
<keyword id="KW-0238">DNA-binding</keyword>
<keyword id="KW-0804">Transcription</keyword>
<keyword id="KW-0805">Transcription regulation</keyword>
<evidence type="ECO:0000255" key="1">
    <source>
        <dbReference type="HAMAP-Rule" id="MF_00105"/>
    </source>
</evidence>
<feature type="chain" id="PRO_0000176970" description="Transcription elongation factor GreA">
    <location>
        <begin position="1"/>
        <end position="158"/>
    </location>
</feature>
<feature type="coiled-coil region" evidence="1">
    <location>
        <begin position="4"/>
        <end position="70"/>
    </location>
</feature>
<organism>
    <name type="scientific">Staphylococcus aureus (strain COL)</name>
    <dbReference type="NCBI Taxonomy" id="93062"/>
    <lineage>
        <taxon>Bacteria</taxon>
        <taxon>Bacillati</taxon>
        <taxon>Bacillota</taxon>
        <taxon>Bacilli</taxon>
        <taxon>Bacillales</taxon>
        <taxon>Staphylococcaceae</taxon>
        <taxon>Staphylococcus</taxon>
    </lineage>
</organism>
<sequence length="158" mass="17743">MENQKQYPMTQEGFEKLERELEELKTVKRPEVVEKIKVARSFGDLSENSEYDAAKDEQGFIEQDIQRIEHMLRNALIIEDTGDNNVVKIGKTVTFVELPGDEEESYQIVGSAESDAFNGKISNESPMAKALIGKGLDDEVRVPLPNGGEMNVKIVNIQ</sequence>